<comment type="function">
    <text evidence="1">Catalyzes the NADPH-dependent reduction of 7-cyano-7-deazaguanine (preQ0) to 7-aminomethyl-7-deazaguanine (preQ1).</text>
</comment>
<comment type="catalytic activity">
    <reaction evidence="1">
        <text>7-aminomethyl-7-carbaguanine + 2 NADP(+) = 7-cyano-7-deazaguanine + 2 NADPH + 3 H(+)</text>
        <dbReference type="Rhea" id="RHEA:13409"/>
        <dbReference type="ChEBI" id="CHEBI:15378"/>
        <dbReference type="ChEBI" id="CHEBI:45075"/>
        <dbReference type="ChEBI" id="CHEBI:57783"/>
        <dbReference type="ChEBI" id="CHEBI:58349"/>
        <dbReference type="ChEBI" id="CHEBI:58703"/>
        <dbReference type="EC" id="1.7.1.13"/>
    </reaction>
</comment>
<comment type="pathway">
    <text evidence="1">tRNA modification; tRNA-queuosine biosynthesis.</text>
</comment>
<comment type="subcellular location">
    <subcellularLocation>
        <location evidence="1">Cytoplasm</location>
    </subcellularLocation>
</comment>
<comment type="similarity">
    <text evidence="1">Belongs to the GTP cyclohydrolase I family. QueF type 1 subfamily.</text>
</comment>
<accession>A6TZK7</accession>
<organism>
    <name type="scientific">Staphylococcus aureus (strain JH1)</name>
    <dbReference type="NCBI Taxonomy" id="359787"/>
    <lineage>
        <taxon>Bacteria</taxon>
        <taxon>Bacillati</taxon>
        <taxon>Bacillota</taxon>
        <taxon>Bacilli</taxon>
        <taxon>Bacillales</taxon>
        <taxon>Staphylococcaceae</taxon>
        <taxon>Staphylococcus</taxon>
    </lineage>
</organism>
<gene>
    <name evidence="1" type="primary">queF</name>
    <name type="ordered locus">SaurJH1_0769</name>
</gene>
<proteinExistence type="inferred from homology"/>
<name>QUEF_STAA2</name>
<reference key="1">
    <citation type="submission" date="2007-06" db="EMBL/GenBank/DDBJ databases">
        <title>Complete sequence of chromosome of Staphylococcus aureus subsp. aureus JH1.</title>
        <authorList>
            <consortium name="US DOE Joint Genome Institute"/>
            <person name="Copeland A."/>
            <person name="Lucas S."/>
            <person name="Lapidus A."/>
            <person name="Barry K."/>
            <person name="Detter J.C."/>
            <person name="Glavina del Rio T."/>
            <person name="Hammon N."/>
            <person name="Israni S."/>
            <person name="Dalin E."/>
            <person name="Tice H."/>
            <person name="Pitluck S."/>
            <person name="Chain P."/>
            <person name="Malfatti S."/>
            <person name="Shin M."/>
            <person name="Vergez L."/>
            <person name="Schmutz J."/>
            <person name="Larimer F."/>
            <person name="Land M."/>
            <person name="Hauser L."/>
            <person name="Kyrpides N."/>
            <person name="Ivanova N."/>
            <person name="Tomasz A."/>
            <person name="Richardson P."/>
        </authorList>
    </citation>
    <scope>NUCLEOTIDE SEQUENCE [LARGE SCALE GENOMIC DNA]</scope>
    <source>
        <strain>JH1</strain>
    </source>
</reference>
<dbReference type="EC" id="1.7.1.13" evidence="1"/>
<dbReference type="EMBL" id="CP000736">
    <property type="protein sequence ID" value="ABR51625.1"/>
    <property type="molecule type" value="Genomic_DNA"/>
</dbReference>
<dbReference type="SMR" id="A6TZK7"/>
<dbReference type="KEGG" id="sah:SaurJH1_0769"/>
<dbReference type="HOGENOM" id="CLU_102489_0_1_9"/>
<dbReference type="UniPathway" id="UPA00392"/>
<dbReference type="GO" id="GO:0005737">
    <property type="term" value="C:cytoplasm"/>
    <property type="evidence" value="ECO:0007669"/>
    <property type="project" value="UniProtKB-SubCell"/>
</dbReference>
<dbReference type="GO" id="GO:0033739">
    <property type="term" value="F:preQ1 synthase activity"/>
    <property type="evidence" value="ECO:0007669"/>
    <property type="project" value="UniProtKB-UniRule"/>
</dbReference>
<dbReference type="GO" id="GO:0008616">
    <property type="term" value="P:queuosine biosynthetic process"/>
    <property type="evidence" value="ECO:0007669"/>
    <property type="project" value="UniProtKB-UniRule"/>
</dbReference>
<dbReference type="GO" id="GO:0006400">
    <property type="term" value="P:tRNA modification"/>
    <property type="evidence" value="ECO:0007669"/>
    <property type="project" value="UniProtKB-UniRule"/>
</dbReference>
<dbReference type="Gene3D" id="3.30.1130.10">
    <property type="match status" value="1"/>
</dbReference>
<dbReference type="HAMAP" id="MF_00818">
    <property type="entry name" value="QueF_type1"/>
    <property type="match status" value="1"/>
</dbReference>
<dbReference type="InterPro" id="IPR043133">
    <property type="entry name" value="GTP-CH-I_C/QueF"/>
</dbReference>
<dbReference type="InterPro" id="IPR050084">
    <property type="entry name" value="NADPH_dep_7-cyano-7-deazaG_red"/>
</dbReference>
<dbReference type="InterPro" id="IPR029500">
    <property type="entry name" value="QueF"/>
</dbReference>
<dbReference type="InterPro" id="IPR016856">
    <property type="entry name" value="QueF_type1"/>
</dbReference>
<dbReference type="NCBIfam" id="TIGR03139">
    <property type="entry name" value="QueF-II"/>
    <property type="match status" value="1"/>
</dbReference>
<dbReference type="PANTHER" id="PTHR34354">
    <property type="entry name" value="NADPH-DEPENDENT 7-CYANO-7-DEAZAGUANINE REDUCTASE"/>
    <property type="match status" value="1"/>
</dbReference>
<dbReference type="PANTHER" id="PTHR34354:SF1">
    <property type="entry name" value="NADPH-DEPENDENT 7-CYANO-7-DEAZAGUANINE REDUCTASE"/>
    <property type="match status" value="1"/>
</dbReference>
<dbReference type="Pfam" id="PF14489">
    <property type="entry name" value="QueF"/>
    <property type="match status" value="1"/>
</dbReference>
<dbReference type="PIRSF" id="PIRSF027377">
    <property type="entry name" value="Nitrile_oxidored_QueF"/>
    <property type="match status" value="1"/>
</dbReference>
<dbReference type="SUPFAM" id="SSF55620">
    <property type="entry name" value="Tetrahydrobiopterin biosynthesis enzymes-like"/>
    <property type="match status" value="1"/>
</dbReference>
<protein>
    <recommendedName>
        <fullName evidence="1">NADPH-dependent 7-cyano-7-deazaguanine reductase</fullName>
        <ecNumber evidence="1">1.7.1.13</ecNumber>
    </recommendedName>
    <alternativeName>
        <fullName evidence="1">7-cyano-7-carbaguanine reductase</fullName>
    </alternativeName>
    <alternativeName>
        <fullName evidence="1">NADPH-dependent nitrile oxidoreductase</fullName>
    </alternativeName>
    <alternativeName>
        <fullName evidence="1">PreQ(0) reductase</fullName>
    </alternativeName>
</protein>
<keyword id="KW-0963">Cytoplasm</keyword>
<keyword id="KW-0521">NADP</keyword>
<keyword id="KW-0560">Oxidoreductase</keyword>
<keyword id="KW-0671">Queuosine biosynthesis</keyword>
<feature type="chain" id="PRO_1000083839" description="NADPH-dependent 7-cyano-7-deazaguanine reductase">
    <location>
        <begin position="1"/>
        <end position="166"/>
    </location>
</feature>
<feature type="active site" description="Thioimide intermediate" evidence="1">
    <location>
        <position position="57"/>
    </location>
</feature>
<feature type="active site" description="Proton donor" evidence="1">
    <location>
        <position position="64"/>
    </location>
</feature>
<feature type="binding site" evidence="1">
    <location>
        <begin position="79"/>
        <end position="81"/>
    </location>
    <ligand>
        <name>substrate</name>
    </ligand>
</feature>
<feature type="binding site" evidence="1">
    <location>
        <begin position="98"/>
        <end position="99"/>
    </location>
    <ligand>
        <name>substrate</name>
    </ligand>
</feature>
<sequence>MAHGRQQDELQDITLLGNQDNTYNFDYRPDVLESFDNKHQGRDYFVKFNCPEFTSLCPITGQPDFATIYISYIPNVKMVESKSLKLYLFSFRNHGDFHEDCMNIIMNDLIELMDPHYIEVWGKFTPRGGISIDPYTNYGRPNSKYEKMAEHRLMNHDLYPEKIDNR</sequence>
<evidence type="ECO:0000255" key="1">
    <source>
        <dbReference type="HAMAP-Rule" id="MF_00818"/>
    </source>
</evidence>